<keyword id="KW-1003">Cell membrane</keyword>
<keyword id="KW-0342">GTP-binding</keyword>
<keyword id="KW-0378">Hydrolase</keyword>
<keyword id="KW-0472">Membrane</keyword>
<keyword id="KW-0547">Nucleotide-binding</keyword>
<keyword id="KW-0648">Protein biosynthesis</keyword>
<accession>Q2FGD9</accession>
<evidence type="ECO:0000255" key="1">
    <source>
        <dbReference type="HAMAP-Rule" id="MF_00071"/>
    </source>
</evidence>
<dbReference type="EC" id="3.6.5.n1" evidence="1"/>
<dbReference type="EMBL" id="CP000255">
    <property type="protein sequence ID" value="ABD22480.1"/>
    <property type="molecule type" value="Genomic_DNA"/>
</dbReference>
<dbReference type="RefSeq" id="WP_000368341.1">
    <property type="nucleotide sequence ID" value="NZ_CP027476.1"/>
</dbReference>
<dbReference type="SMR" id="Q2FGD9"/>
<dbReference type="KEGG" id="saa:SAUSA300_1544"/>
<dbReference type="HOGENOM" id="CLU_009995_3_3_9"/>
<dbReference type="OMA" id="QVKCDEN"/>
<dbReference type="Proteomes" id="UP000001939">
    <property type="component" value="Chromosome"/>
</dbReference>
<dbReference type="GO" id="GO:0005886">
    <property type="term" value="C:plasma membrane"/>
    <property type="evidence" value="ECO:0007669"/>
    <property type="project" value="UniProtKB-SubCell"/>
</dbReference>
<dbReference type="GO" id="GO:0005525">
    <property type="term" value="F:GTP binding"/>
    <property type="evidence" value="ECO:0007669"/>
    <property type="project" value="UniProtKB-UniRule"/>
</dbReference>
<dbReference type="GO" id="GO:0003924">
    <property type="term" value="F:GTPase activity"/>
    <property type="evidence" value="ECO:0007669"/>
    <property type="project" value="UniProtKB-UniRule"/>
</dbReference>
<dbReference type="GO" id="GO:0043022">
    <property type="term" value="F:ribosome binding"/>
    <property type="evidence" value="ECO:0007669"/>
    <property type="project" value="UniProtKB-UniRule"/>
</dbReference>
<dbReference type="GO" id="GO:0003746">
    <property type="term" value="F:translation elongation factor activity"/>
    <property type="evidence" value="ECO:0007669"/>
    <property type="project" value="UniProtKB-UniRule"/>
</dbReference>
<dbReference type="GO" id="GO:0045727">
    <property type="term" value="P:positive regulation of translation"/>
    <property type="evidence" value="ECO:0007669"/>
    <property type="project" value="UniProtKB-UniRule"/>
</dbReference>
<dbReference type="CDD" id="cd03699">
    <property type="entry name" value="EF4_II"/>
    <property type="match status" value="1"/>
</dbReference>
<dbReference type="CDD" id="cd16260">
    <property type="entry name" value="EF4_III"/>
    <property type="match status" value="1"/>
</dbReference>
<dbReference type="CDD" id="cd01890">
    <property type="entry name" value="LepA"/>
    <property type="match status" value="1"/>
</dbReference>
<dbReference type="CDD" id="cd03709">
    <property type="entry name" value="lepA_C"/>
    <property type="match status" value="1"/>
</dbReference>
<dbReference type="FunFam" id="3.40.50.300:FF:000078">
    <property type="entry name" value="Elongation factor 4"/>
    <property type="match status" value="1"/>
</dbReference>
<dbReference type="FunFam" id="2.40.30.10:FF:000015">
    <property type="entry name" value="Translation factor GUF1, mitochondrial"/>
    <property type="match status" value="1"/>
</dbReference>
<dbReference type="FunFam" id="3.30.70.240:FF:000007">
    <property type="entry name" value="Translation factor GUF1, mitochondrial"/>
    <property type="match status" value="1"/>
</dbReference>
<dbReference type="FunFam" id="3.30.70.2570:FF:000001">
    <property type="entry name" value="Translation factor GUF1, mitochondrial"/>
    <property type="match status" value="1"/>
</dbReference>
<dbReference type="FunFam" id="3.30.70.870:FF:000004">
    <property type="entry name" value="Translation factor GUF1, mitochondrial"/>
    <property type="match status" value="1"/>
</dbReference>
<dbReference type="Gene3D" id="3.30.70.240">
    <property type="match status" value="1"/>
</dbReference>
<dbReference type="Gene3D" id="3.30.70.2570">
    <property type="entry name" value="Elongation factor 4, C-terminal domain"/>
    <property type="match status" value="1"/>
</dbReference>
<dbReference type="Gene3D" id="3.30.70.870">
    <property type="entry name" value="Elongation Factor G (Translational Gtpase), domain 3"/>
    <property type="match status" value="1"/>
</dbReference>
<dbReference type="Gene3D" id="3.40.50.300">
    <property type="entry name" value="P-loop containing nucleotide triphosphate hydrolases"/>
    <property type="match status" value="1"/>
</dbReference>
<dbReference type="Gene3D" id="2.40.30.10">
    <property type="entry name" value="Translation factors"/>
    <property type="match status" value="1"/>
</dbReference>
<dbReference type="HAMAP" id="MF_00071">
    <property type="entry name" value="LepA"/>
    <property type="match status" value="1"/>
</dbReference>
<dbReference type="InterPro" id="IPR006297">
    <property type="entry name" value="EF-4"/>
</dbReference>
<dbReference type="InterPro" id="IPR035647">
    <property type="entry name" value="EFG_III/V"/>
</dbReference>
<dbReference type="InterPro" id="IPR000640">
    <property type="entry name" value="EFG_V-like"/>
</dbReference>
<dbReference type="InterPro" id="IPR004161">
    <property type="entry name" value="EFTu-like_2"/>
</dbReference>
<dbReference type="InterPro" id="IPR031157">
    <property type="entry name" value="G_TR_CS"/>
</dbReference>
<dbReference type="InterPro" id="IPR038363">
    <property type="entry name" value="LepA_C_sf"/>
</dbReference>
<dbReference type="InterPro" id="IPR013842">
    <property type="entry name" value="LepA_CTD"/>
</dbReference>
<dbReference type="InterPro" id="IPR035654">
    <property type="entry name" value="LepA_IV"/>
</dbReference>
<dbReference type="InterPro" id="IPR027417">
    <property type="entry name" value="P-loop_NTPase"/>
</dbReference>
<dbReference type="InterPro" id="IPR005225">
    <property type="entry name" value="Small_GTP-bd"/>
</dbReference>
<dbReference type="InterPro" id="IPR000795">
    <property type="entry name" value="T_Tr_GTP-bd_dom"/>
</dbReference>
<dbReference type="InterPro" id="IPR009000">
    <property type="entry name" value="Transl_B-barrel_sf"/>
</dbReference>
<dbReference type="NCBIfam" id="TIGR01393">
    <property type="entry name" value="lepA"/>
    <property type="match status" value="1"/>
</dbReference>
<dbReference type="NCBIfam" id="TIGR00231">
    <property type="entry name" value="small_GTP"/>
    <property type="match status" value="1"/>
</dbReference>
<dbReference type="PANTHER" id="PTHR43512:SF4">
    <property type="entry name" value="TRANSLATION FACTOR GUF1 HOMOLOG, CHLOROPLASTIC"/>
    <property type="match status" value="1"/>
</dbReference>
<dbReference type="PANTHER" id="PTHR43512">
    <property type="entry name" value="TRANSLATION FACTOR GUF1-RELATED"/>
    <property type="match status" value="1"/>
</dbReference>
<dbReference type="Pfam" id="PF00679">
    <property type="entry name" value="EFG_C"/>
    <property type="match status" value="1"/>
</dbReference>
<dbReference type="Pfam" id="PF00009">
    <property type="entry name" value="GTP_EFTU"/>
    <property type="match status" value="1"/>
</dbReference>
<dbReference type="Pfam" id="PF03144">
    <property type="entry name" value="GTP_EFTU_D2"/>
    <property type="match status" value="1"/>
</dbReference>
<dbReference type="Pfam" id="PF06421">
    <property type="entry name" value="LepA_C"/>
    <property type="match status" value="1"/>
</dbReference>
<dbReference type="PRINTS" id="PR00315">
    <property type="entry name" value="ELONGATNFCT"/>
</dbReference>
<dbReference type="SMART" id="SM00838">
    <property type="entry name" value="EFG_C"/>
    <property type="match status" value="1"/>
</dbReference>
<dbReference type="SUPFAM" id="SSF54980">
    <property type="entry name" value="EF-G C-terminal domain-like"/>
    <property type="match status" value="2"/>
</dbReference>
<dbReference type="SUPFAM" id="SSF52540">
    <property type="entry name" value="P-loop containing nucleoside triphosphate hydrolases"/>
    <property type="match status" value="1"/>
</dbReference>
<dbReference type="SUPFAM" id="SSF50447">
    <property type="entry name" value="Translation proteins"/>
    <property type="match status" value="1"/>
</dbReference>
<dbReference type="PROSITE" id="PS00301">
    <property type="entry name" value="G_TR_1"/>
    <property type="match status" value="1"/>
</dbReference>
<dbReference type="PROSITE" id="PS51722">
    <property type="entry name" value="G_TR_2"/>
    <property type="match status" value="1"/>
</dbReference>
<protein>
    <recommendedName>
        <fullName evidence="1">Elongation factor 4</fullName>
        <shortName evidence="1">EF-4</shortName>
        <ecNumber evidence="1">3.6.5.n1</ecNumber>
    </recommendedName>
    <alternativeName>
        <fullName evidence="1">Ribosomal back-translocase LepA</fullName>
    </alternativeName>
</protein>
<gene>
    <name evidence="1" type="primary">lepA</name>
    <name type="ordered locus">SAUSA300_1544</name>
</gene>
<reference key="1">
    <citation type="journal article" date="2006" name="Lancet">
        <title>Complete genome sequence of USA300, an epidemic clone of community-acquired meticillin-resistant Staphylococcus aureus.</title>
        <authorList>
            <person name="Diep B.A."/>
            <person name="Gill S.R."/>
            <person name="Chang R.F."/>
            <person name="Phan T.H."/>
            <person name="Chen J.H."/>
            <person name="Davidson M.G."/>
            <person name="Lin F."/>
            <person name="Lin J."/>
            <person name="Carleton H.A."/>
            <person name="Mongodin E.F."/>
            <person name="Sensabaugh G.F."/>
            <person name="Perdreau-Remington F."/>
        </authorList>
    </citation>
    <scope>NUCLEOTIDE SEQUENCE [LARGE SCALE GENOMIC DNA]</scope>
    <source>
        <strain>USA300</strain>
    </source>
</reference>
<comment type="function">
    <text evidence="1">Required for accurate and efficient protein synthesis under certain stress conditions. May act as a fidelity factor of the translation reaction, by catalyzing a one-codon backward translocation of tRNAs on improperly translocated ribosomes. Back-translocation proceeds from a post-translocation (POST) complex to a pre-translocation (PRE) complex, thus giving elongation factor G a second chance to translocate the tRNAs correctly. Binds to ribosomes in a GTP-dependent manner.</text>
</comment>
<comment type="catalytic activity">
    <reaction evidence="1">
        <text>GTP + H2O = GDP + phosphate + H(+)</text>
        <dbReference type="Rhea" id="RHEA:19669"/>
        <dbReference type="ChEBI" id="CHEBI:15377"/>
        <dbReference type="ChEBI" id="CHEBI:15378"/>
        <dbReference type="ChEBI" id="CHEBI:37565"/>
        <dbReference type="ChEBI" id="CHEBI:43474"/>
        <dbReference type="ChEBI" id="CHEBI:58189"/>
        <dbReference type="EC" id="3.6.5.n1"/>
    </reaction>
</comment>
<comment type="subcellular location">
    <subcellularLocation>
        <location evidence="1">Cell membrane</location>
        <topology evidence="1">Peripheral membrane protein</topology>
        <orientation evidence="1">Cytoplasmic side</orientation>
    </subcellularLocation>
</comment>
<comment type="similarity">
    <text evidence="1">Belongs to the TRAFAC class translation factor GTPase superfamily. Classic translation factor GTPase family. LepA subfamily.</text>
</comment>
<sequence>MDNEQRLKRRENIRNFSIIAHIDHGKSTLADRILENTKSVETRDMQDQLLDSMDLERERGITIKLNAVRLKYEAKDGNTYTFHLIDTPGHVDFTYEVSRSLAACEGAILVVDAAQGIEAQTLANVYLALDNELELLPVINKIDLPAAEPERVKQEIEDMIGLDQDDVVLASAKSNIGIEEILEKIVEVVPAPDGDPEAPLKALIFDSEYDPYRGVISSIRIVDGVVKAGDKIRMMATGKEFEVTEVGINTPKQLPVDELTVGDVGYIIASIKNVDDSRVGDTITLASRPASEPLQGYKKMNPMVYCGLFPIDNKNYNDLREALEKLQLNDASLEFEPESSQALGFGYRTGFLGMLHMEIIQERIEREFGIELIATAPSVIYQCVLRDGSEVTVDNPAQMPDRDKIDKIFEPYVRATMMVPNDYVGAVMELCQRKRGQFINMDYLDDIRVNIVYELPLAEVVFDFFDQLKSNTKGYASFDYEFIENKESNLVKMDILLNGDKVDALSFIVHRDFAYERGKALVEKLKTLIPRQQFEVPVQAAIGQKIVARTNIKSMGKNVLAKCYGGDISRKRKLLEKQKAGKAKMKAVGNVEIPQDAFLAVLKMDDE</sequence>
<feature type="chain" id="PRO_0000265709" description="Elongation factor 4">
    <location>
        <begin position="1"/>
        <end position="607"/>
    </location>
</feature>
<feature type="domain" description="tr-type G">
    <location>
        <begin position="11"/>
        <end position="193"/>
    </location>
</feature>
<feature type="binding site" evidence="1">
    <location>
        <begin position="23"/>
        <end position="28"/>
    </location>
    <ligand>
        <name>GTP</name>
        <dbReference type="ChEBI" id="CHEBI:37565"/>
    </ligand>
</feature>
<feature type="binding site" evidence="1">
    <location>
        <begin position="140"/>
        <end position="143"/>
    </location>
    <ligand>
        <name>GTP</name>
        <dbReference type="ChEBI" id="CHEBI:37565"/>
    </ligand>
</feature>
<proteinExistence type="inferred from homology"/>
<organism>
    <name type="scientific">Staphylococcus aureus (strain USA300)</name>
    <dbReference type="NCBI Taxonomy" id="367830"/>
    <lineage>
        <taxon>Bacteria</taxon>
        <taxon>Bacillati</taxon>
        <taxon>Bacillota</taxon>
        <taxon>Bacilli</taxon>
        <taxon>Bacillales</taxon>
        <taxon>Staphylococcaceae</taxon>
        <taxon>Staphylococcus</taxon>
    </lineage>
</organism>
<name>LEPA_STAA3</name>